<evidence type="ECO:0000250" key="1"/>
<evidence type="ECO:0000256" key="2">
    <source>
        <dbReference type="SAM" id="MobiDB-lite"/>
    </source>
</evidence>
<evidence type="ECO:0000269" key="3">
    <source>
    </source>
</evidence>
<evidence type="ECO:0000269" key="4">
    <source>
    </source>
</evidence>
<evidence type="ECO:0000269" key="5">
    <source>
    </source>
</evidence>
<evidence type="ECO:0000269" key="6">
    <source>
    </source>
</evidence>
<evidence type="ECO:0000305" key="7"/>
<gene>
    <name type="primary">RPA2A</name>
    <name type="synonym">ROR1</name>
    <name type="synonym">RPA32A</name>
    <name type="ordered locus">At2g24490</name>
    <name type="ORF">T28I24.22</name>
</gene>
<protein>
    <recommendedName>
        <fullName>Replication protein A 32 kDa subunit A</fullName>
        <shortName>AtRPA32A</shortName>
        <shortName>RP-A p32 A</shortName>
    </recommendedName>
    <alternativeName>
        <fullName>DNA replication protein A2 subunit A</fullName>
    </alternativeName>
    <alternativeName>
        <fullName>Protein SUPPRESSOR OF ROS1</fullName>
    </alternativeName>
    <alternativeName>
        <fullName>Replication factor A protein 2 A</fullName>
        <shortName>AtRPA2 A</shortName>
        <shortName>RF-A protein 2 A</shortName>
    </alternativeName>
    <alternativeName>
        <fullName>Replicon protein A2 A</fullName>
    </alternativeName>
</protein>
<dbReference type="EMBL" id="DQ284987">
    <property type="protein sequence ID" value="ABB86293.1"/>
    <property type="molecule type" value="mRNA"/>
</dbReference>
<dbReference type="EMBL" id="AC006403">
    <property type="protein sequence ID" value="AAD18120.2"/>
    <property type="molecule type" value="Genomic_DNA"/>
</dbReference>
<dbReference type="EMBL" id="CP002685">
    <property type="protein sequence ID" value="AEC07582.1"/>
    <property type="molecule type" value="Genomic_DNA"/>
</dbReference>
<dbReference type="EMBL" id="CP002685">
    <property type="protein sequence ID" value="AEC07583.1"/>
    <property type="molecule type" value="Genomic_DNA"/>
</dbReference>
<dbReference type="EMBL" id="AK117537">
    <property type="protein sequence ID" value="BAC42198.1"/>
    <property type="molecule type" value="mRNA"/>
</dbReference>
<dbReference type="EMBL" id="BT005433">
    <property type="protein sequence ID" value="AAO63853.1"/>
    <property type="molecule type" value="mRNA"/>
</dbReference>
<dbReference type="EMBL" id="AY088525">
    <property type="protein sequence ID" value="AAM66059.1"/>
    <property type="molecule type" value="mRNA"/>
</dbReference>
<dbReference type="PIR" id="C84637">
    <property type="entry name" value="C84637"/>
</dbReference>
<dbReference type="SMR" id="Q9ZQ19"/>
<dbReference type="BioGRID" id="2337">
    <property type="interactions" value="8"/>
</dbReference>
<dbReference type="FunCoup" id="Q9ZQ19">
    <property type="interactions" value="3622"/>
</dbReference>
<dbReference type="IntAct" id="Q9ZQ19">
    <property type="interactions" value="6"/>
</dbReference>
<dbReference type="STRING" id="3702.Q9ZQ19"/>
<dbReference type="PaxDb" id="3702-AT2G24490.2"/>
<dbReference type="ProteomicsDB" id="236905"/>
<dbReference type="EnsemblPlants" id="AT2G24490.1">
    <property type="protein sequence ID" value="AT2G24490.1"/>
    <property type="gene ID" value="AT2G24490"/>
</dbReference>
<dbReference type="EnsemblPlants" id="AT2G24490.2">
    <property type="protein sequence ID" value="AT2G24490.2"/>
    <property type="gene ID" value="AT2G24490"/>
</dbReference>
<dbReference type="GeneID" id="816985"/>
<dbReference type="Gramene" id="AT2G24490.1">
    <property type="protein sequence ID" value="AT2G24490.1"/>
    <property type="gene ID" value="AT2G24490"/>
</dbReference>
<dbReference type="Gramene" id="AT2G24490.2">
    <property type="protein sequence ID" value="AT2G24490.2"/>
    <property type="gene ID" value="AT2G24490"/>
</dbReference>
<dbReference type="KEGG" id="ath:AT2G24490"/>
<dbReference type="Araport" id="AT2G24490"/>
<dbReference type="TAIR" id="AT2G24490">
    <property type="gene designation" value="RPA2"/>
</dbReference>
<dbReference type="eggNOG" id="KOG3108">
    <property type="taxonomic scope" value="Eukaryota"/>
</dbReference>
<dbReference type="HOGENOM" id="CLU_051033_3_1_1"/>
<dbReference type="InParanoid" id="Q9ZQ19"/>
<dbReference type="OMA" id="RNEGHIY"/>
<dbReference type="OrthoDB" id="25571at2759"/>
<dbReference type="PhylomeDB" id="Q9ZQ19"/>
<dbReference type="PRO" id="PR:Q9ZQ19"/>
<dbReference type="Proteomes" id="UP000006548">
    <property type="component" value="Chromosome 2"/>
</dbReference>
<dbReference type="ExpressionAtlas" id="Q9ZQ19">
    <property type="expression patterns" value="baseline and differential"/>
</dbReference>
<dbReference type="GO" id="GO:0005634">
    <property type="term" value="C:nucleus"/>
    <property type="evidence" value="ECO:0000314"/>
    <property type="project" value="TAIR"/>
</dbReference>
<dbReference type="GO" id="GO:0003677">
    <property type="term" value="F:DNA binding"/>
    <property type="evidence" value="ECO:0007669"/>
    <property type="project" value="UniProtKB-KW"/>
</dbReference>
<dbReference type="GO" id="GO:0006310">
    <property type="term" value="P:DNA recombination"/>
    <property type="evidence" value="ECO:0007669"/>
    <property type="project" value="UniProtKB-KW"/>
</dbReference>
<dbReference type="GO" id="GO:0006281">
    <property type="term" value="P:DNA repair"/>
    <property type="evidence" value="ECO:0000315"/>
    <property type="project" value="TAIR"/>
</dbReference>
<dbReference type="GO" id="GO:0006260">
    <property type="term" value="P:DNA replication"/>
    <property type="evidence" value="ECO:0007669"/>
    <property type="project" value="UniProtKB-KW"/>
</dbReference>
<dbReference type="CDD" id="cd04478">
    <property type="entry name" value="RPA2_DBD_D"/>
    <property type="match status" value="1"/>
</dbReference>
<dbReference type="FunFam" id="1.10.10.10:FF:000168">
    <property type="entry name" value="Replication protein A 32 kDa subunit"/>
    <property type="match status" value="1"/>
</dbReference>
<dbReference type="FunFam" id="2.40.50.140:FF:000184">
    <property type="entry name" value="replication protein A 32 kDa subunit A-like"/>
    <property type="match status" value="1"/>
</dbReference>
<dbReference type="Gene3D" id="2.40.50.140">
    <property type="entry name" value="Nucleic acid-binding proteins"/>
    <property type="match status" value="1"/>
</dbReference>
<dbReference type="Gene3D" id="1.10.10.10">
    <property type="entry name" value="Winged helix-like DNA-binding domain superfamily/Winged helix DNA-binding domain"/>
    <property type="match status" value="1"/>
</dbReference>
<dbReference type="InterPro" id="IPR012340">
    <property type="entry name" value="NA-bd_OB-fold"/>
</dbReference>
<dbReference type="InterPro" id="IPR004365">
    <property type="entry name" value="NA-bd_OB_tRNA"/>
</dbReference>
<dbReference type="InterPro" id="IPR040260">
    <property type="entry name" value="RFA2-like"/>
</dbReference>
<dbReference type="InterPro" id="IPR014646">
    <property type="entry name" value="Rfa2/RPA32"/>
</dbReference>
<dbReference type="InterPro" id="IPR014892">
    <property type="entry name" value="RPA_C"/>
</dbReference>
<dbReference type="InterPro" id="IPR036388">
    <property type="entry name" value="WH-like_DNA-bd_sf"/>
</dbReference>
<dbReference type="InterPro" id="IPR036390">
    <property type="entry name" value="WH_DNA-bd_sf"/>
</dbReference>
<dbReference type="PANTHER" id="PTHR13989:SF34">
    <property type="entry name" value="REPLICATION PROTEIN A 32 KDA SUBUNIT A"/>
    <property type="match status" value="1"/>
</dbReference>
<dbReference type="PANTHER" id="PTHR13989">
    <property type="entry name" value="REPLICATION PROTEIN A-RELATED"/>
    <property type="match status" value="1"/>
</dbReference>
<dbReference type="Pfam" id="PF08784">
    <property type="entry name" value="RPA_C"/>
    <property type="match status" value="1"/>
</dbReference>
<dbReference type="Pfam" id="PF01336">
    <property type="entry name" value="tRNA_anti-codon"/>
    <property type="match status" value="1"/>
</dbReference>
<dbReference type="PIRSF" id="PIRSF036949">
    <property type="entry name" value="RPA32"/>
    <property type="match status" value="1"/>
</dbReference>
<dbReference type="SUPFAM" id="SSF50249">
    <property type="entry name" value="Nucleic acid-binding proteins"/>
    <property type="match status" value="1"/>
</dbReference>
<dbReference type="SUPFAM" id="SSF46785">
    <property type="entry name" value="Winged helix' DNA-binding domain"/>
    <property type="match status" value="1"/>
</dbReference>
<sequence length="279" mass="30980">MFSSSQFEPNSGFSGGGFMSSQPSQAYESSSSTAKNRDFQGLVPVTVKQITECFQSSGEKSGLVINGISLTNVSLVGLVCDKDESKVTEVRFTLDDGTGRIDCKRWVSETFDAREMESVRDGTYVRLSGHLKTFQGKTQLLVFSVRPIMDFNEVTFHYIECIHFYSQNSESQRQQVGDVTQSVNTTFQGGSNTNQATLLNPVVSSQNNDGNGRKNLDDMILDYLKQPACTARQQGIHIDEIAQQLKIPKNKLEGVVQSLEGDGLIYSTIDEYHFKHVEL</sequence>
<reference key="1">
    <citation type="journal article" date="2006" name="Plant Cell">
        <title>ROR1/RPA2A, a putative replication protein A2, functions in epigenetic gene silencing and in regulation of meristem development in Arabidopsis.</title>
        <authorList>
            <person name="Xia R."/>
            <person name="Wang J."/>
            <person name="Liu C."/>
            <person name="Wang Y."/>
            <person name="Wang Y."/>
            <person name="Zhai J."/>
            <person name="Liu J."/>
            <person name="Hong X."/>
            <person name="Cao X."/>
            <person name="Zhu J.-K."/>
            <person name="Gong Z."/>
        </authorList>
    </citation>
    <scope>NUCLEOTIDE SEQUENCE [MRNA]</scope>
    <scope>FUNCTION</scope>
    <scope>DISRUPTION PHENOTYPE</scope>
    <scope>SUBCELLULAR LOCATION</scope>
    <scope>TISSUE SPECIFICITY</scope>
    <scope>DEVELOPMENTAL STAGE</scope>
    <scope>INTERACTION WITH ROS1</scope>
    <scope>GENE FAMILY</scope>
    <scope>NOMENCLATURE</scope>
    <source>
        <strain>cv. C24</strain>
        <strain>cv. Columbia</strain>
    </source>
</reference>
<reference key="2">
    <citation type="journal article" date="1999" name="Nature">
        <title>Sequence and analysis of chromosome 2 of the plant Arabidopsis thaliana.</title>
        <authorList>
            <person name="Lin X."/>
            <person name="Kaul S."/>
            <person name="Rounsley S.D."/>
            <person name="Shea T.P."/>
            <person name="Benito M.-I."/>
            <person name="Town C.D."/>
            <person name="Fujii C.Y."/>
            <person name="Mason T.M."/>
            <person name="Bowman C.L."/>
            <person name="Barnstead M.E."/>
            <person name="Feldblyum T.V."/>
            <person name="Buell C.R."/>
            <person name="Ketchum K.A."/>
            <person name="Lee J.J."/>
            <person name="Ronning C.M."/>
            <person name="Koo H.L."/>
            <person name="Moffat K.S."/>
            <person name="Cronin L.A."/>
            <person name="Shen M."/>
            <person name="Pai G."/>
            <person name="Van Aken S."/>
            <person name="Umayam L."/>
            <person name="Tallon L.J."/>
            <person name="Gill J.E."/>
            <person name="Adams M.D."/>
            <person name="Carrera A.J."/>
            <person name="Creasy T.H."/>
            <person name="Goodman H.M."/>
            <person name="Somerville C.R."/>
            <person name="Copenhaver G.P."/>
            <person name="Preuss D."/>
            <person name="Nierman W.C."/>
            <person name="White O."/>
            <person name="Eisen J.A."/>
            <person name="Salzberg S.L."/>
            <person name="Fraser C.M."/>
            <person name="Venter J.C."/>
        </authorList>
    </citation>
    <scope>NUCLEOTIDE SEQUENCE [LARGE SCALE GENOMIC DNA]</scope>
    <source>
        <strain>cv. Columbia</strain>
    </source>
</reference>
<reference key="3">
    <citation type="journal article" date="2017" name="Plant J.">
        <title>Araport11: a complete reannotation of the Arabidopsis thaliana reference genome.</title>
        <authorList>
            <person name="Cheng C.Y."/>
            <person name="Krishnakumar V."/>
            <person name="Chan A.P."/>
            <person name="Thibaud-Nissen F."/>
            <person name="Schobel S."/>
            <person name="Town C.D."/>
        </authorList>
    </citation>
    <scope>GENOME REANNOTATION</scope>
    <source>
        <strain>cv. Columbia</strain>
    </source>
</reference>
<reference key="4">
    <citation type="journal article" date="2002" name="Science">
        <title>Functional annotation of a full-length Arabidopsis cDNA collection.</title>
        <authorList>
            <person name="Seki M."/>
            <person name="Narusaka M."/>
            <person name="Kamiya A."/>
            <person name="Ishida J."/>
            <person name="Satou M."/>
            <person name="Sakurai T."/>
            <person name="Nakajima M."/>
            <person name="Enju A."/>
            <person name="Akiyama K."/>
            <person name="Oono Y."/>
            <person name="Muramatsu M."/>
            <person name="Hayashizaki Y."/>
            <person name="Kawai J."/>
            <person name="Carninci P."/>
            <person name="Itoh M."/>
            <person name="Ishii Y."/>
            <person name="Arakawa T."/>
            <person name="Shibata K."/>
            <person name="Shinagawa A."/>
            <person name="Shinozaki K."/>
        </authorList>
    </citation>
    <scope>NUCLEOTIDE SEQUENCE [LARGE SCALE MRNA]</scope>
    <source>
        <strain>cv. Columbia</strain>
    </source>
</reference>
<reference key="5">
    <citation type="journal article" date="2003" name="Science">
        <title>Empirical analysis of transcriptional activity in the Arabidopsis genome.</title>
        <authorList>
            <person name="Yamada K."/>
            <person name="Lim J."/>
            <person name="Dale J.M."/>
            <person name="Chen H."/>
            <person name="Shinn P."/>
            <person name="Palm C.J."/>
            <person name="Southwick A.M."/>
            <person name="Wu H.C."/>
            <person name="Kim C.J."/>
            <person name="Nguyen M."/>
            <person name="Pham P.K."/>
            <person name="Cheuk R.F."/>
            <person name="Karlin-Newmann G."/>
            <person name="Liu S.X."/>
            <person name="Lam B."/>
            <person name="Sakano H."/>
            <person name="Wu T."/>
            <person name="Yu G."/>
            <person name="Miranda M."/>
            <person name="Quach H.L."/>
            <person name="Tripp M."/>
            <person name="Chang C.H."/>
            <person name="Lee J.M."/>
            <person name="Toriumi M.J."/>
            <person name="Chan M.M."/>
            <person name="Tang C.C."/>
            <person name="Onodera C.S."/>
            <person name="Deng J.M."/>
            <person name="Akiyama K."/>
            <person name="Ansari Y."/>
            <person name="Arakawa T."/>
            <person name="Banh J."/>
            <person name="Banno F."/>
            <person name="Bowser L."/>
            <person name="Brooks S.Y."/>
            <person name="Carninci P."/>
            <person name="Chao Q."/>
            <person name="Choy N."/>
            <person name="Enju A."/>
            <person name="Goldsmith A.D."/>
            <person name="Gurjal M."/>
            <person name="Hansen N.F."/>
            <person name="Hayashizaki Y."/>
            <person name="Johnson-Hopson C."/>
            <person name="Hsuan V.W."/>
            <person name="Iida K."/>
            <person name="Karnes M."/>
            <person name="Khan S."/>
            <person name="Koesema E."/>
            <person name="Ishida J."/>
            <person name="Jiang P.X."/>
            <person name="Jones T."/>
            <person name="Kawai J."/>
            <person name="Kamiya A."/>
            <person name="Meyers C."/>
            <person name="Nakajima M."/>
            <person name="Narusaka M."/>
            <person name="Seki M."/>
            <person name="Sakurai T."/>
            <person name="Satou M."/>
            <person name="Tamse R."/>
            <person name="Vaysberg M."/>
            <person name="Wallender E.K."/>
            <person name="Wong C."/>
            <person name="Yamamura Y."/>
            <person name="Yuan S."/>
            <person name="Shinozaki K."/>
            <person name="Davis R.W."/>
            <person name="Theologis A."/>
            <person name="Ecker J.R."/>
        </authorList>
    </citation>
    <scope>NUCLEOTIDE SEQUENCE [LARGE SCALE MRNA]</scope>
    <source>
        <strain>cv. Columbia</strain>
    </source>
</reference>
<reference key="6">
    <citation type="submission" date="2002-03" db="EMBL/GenBank/DDBJ databases">
        <title>Full-length cDNA from Arabidopsis thaliana.</title>
        <authorList>
            <person name="Brover V.V."/>
            <person name="Troukhan M.E."/>
            <person name="Alexandrov N.A."/>
            <person name="Lu Y.-P."/>
            <person name="Flavell R.B."/>
            <person name="Feldmann K.A."/>
        </authorList>
    </citation>
    <scope>NUCLEOTIDE SEQUENCE [LARGE SCALE MRNA]</scope>
</reference>
<reference key="7">
    <citation type="journal article" date="2005" name="Curr. Biol.">
        <title>Mutations in a conserved replication protein suppress transcriptional gene silencing in a DNA-methylation-independent manner in Arabidopsis.</title>
        <authorList>
            <person name="Kapoor A."/>
            <person name="Agarwal M."/>
            <person name="Andreucci A."/>
            <person name="Zheng X."/>
            <person name="Gong Z."/>
            <person name="Hasegawa P.M."/>
            <person name="Bressan R.A."/>
            <person name="Zhu J.-K."/>
        </authorList>
    </citation>
    <scope>FUNCTION</scope>
    <scope>DISRUPTION PHENOTYPE</scope>
    <scope>TISSUE SPECIFICITY</scope>
    <scope>SUBCELLULAR LOCATION</scope>
    <scope>INTERACTION WITH ROS1</scope>
    <source>
        <strain>cv. Columbia</strain>
    </source>
</reference>
<reference key="8">
    <citation type="journal article" date="2005" name="Curr. Biol.">
        <title>Arabidopsis RPA2: a genetic link among transcriptional gene silencing, DNA repair, and DNA replication.</title>
        <authorList>
            <person name="Elmayan T."/>
            <person name="Proux F."/>
            <person name="Vaucheret H."/>
        </authorList>
    </citation>
    <scope>FUNCTION</scope>
    <scope>DISRUPTION PHENOTYPE</scope>
</reference>
<reference key="9">
    <citation type="journal article" date="2010" name="Mol. Syst. Biol.">
        <title>Targeted interactomics reveals a complex core cell cycle machinery in Arabidopsis thaliana.</title>
        <authorList>
            <person name="Van Leene J."/>
            <person name="Hollunder J."/>
            <person name="Eeckhout D."/>
            <person name="Persiau G."/>
            <person name="Van De Slijke E."/>
            <person name="Stals H."/>
            <person name="Van Isterdael G."/>
            <person name="Verkest A."/>
            <person name="Neirynck S."/>
            <person name="Buffel Y."/>
            <person name="De Bodt S."/>
            <person name="Maere S."/>
            <person name="Laukens K."/>
            <person name="Pharazyn A."/>
            <person name="Ferreira P.C.G."/>
            <person name="Eloy N."/>
            <person name="Renne C."/>
            <person name="Meyer C."/>
            <person name="Faure J.-D."/>
            <person name="Steinbrenner J."/>
            <person name="Beynon J."/>
            <person name="Larkin J.C."/>
            <person name="Van de Peer Y."/>
            <person name="Hilson P."/>
            <person name="Kuiper M."/>
            <person name="De Veylder L."/>
            <person name="Van Onckelen H."/>
            <person name="Inze D."/>
            <person name="Witters E."/>
            <person name="De Jaeger G."/>
        </authorList>
    </citation>
    <scope>INTERACTION WITH ASE1/AT3G02920; PDX2; AT5G62350; RPA1A/AT2G06510; ARF1/AT1G10630; AT4G18590 AND AT3G52630</scope>
</reference>
<proteinExistence type="evidence at protein level"/>
<organism>
    <name type="scientific">Arabidopsis thaliana</name>
    <name type="common">Mouse-ear cress</name>
    <dbReference type="NCBI Taxonomy" id="3702"/>
    <lineage>
        <taxon>Eukaryota</taxon>
        <taxon>Viridiplantae</taxon>
        <taxon>Streptophyta</taxon>
        <taxon>Embryophyta</taxon>
        <taxon>Tracheophyta</taxon>
        <taxon>Spermatophyta</taxon>
        <taxon>Magnoliopsida</taxon>
        <taxon>eudicotyledons</taxon>
        <taxon>Gunneridae</taxon>
        <taxon>Pentapetalae</taxon>
        <taxon>rosids</taxon>
        <taxon>malvids</taxon>
        <taxon>Brassicales</taxon>
        <taxon>Brassicaceae</taxon>
        <taxon>Camelineae</taxon>
        <taxon>Arabidopsis</taxon>
    </lineage>
</organism>
<comment type="function">
    <text evidence="3 4 5">Component of the replication protein A complex (RPA) required for DNA recombination, repair and replication. The activity of RPA is mediated by single-stranded DNA binding and protein interactions. Required fo cell division in meristems. Involved in the maintenance of transcriptional epigenetic gene silencing (TGS) at specific loci (including some transposons) by regulating histone H3 acetylation, 'Lys-4' and 'Lys-9' methylation.</text>
</comment>
<comment type="subunit">
    <text evidence="1 3 5 6">Heterotrimer of RPA1, RPA2 and RPA3 (canonical replication protein A complex) (By similarity). Interacts with ROS1. Binds to ASE1/At3g02920, PDX2, At5g62350, RPA1A/At2g06510, ARF1/At1g10630, At4g18590 and At3g52630.</text>
</comment>
<comment type="subcellular location">
    <subcellularLocation>
        <location evidence="3 5">Nucleus</location>
    </subcellularLocation>
    <text evidence="1">Redistributes to discrete nuclear foci upon DNA damage.</text>
</comment>
<comment type="tissue specificity">
    <text evidence="3 5">Strongly expressed in shoot and root meristems. Present in seedlings, roots, leaves, siliques and flowers.</text>
</comment>
<comment type="developmental stage">
    <text evidence="5">Accumulates essentially in meristematic active tissues. In seedlings, expressed in primary roots, shoot apical meristems (SAMs), cotyledons, and vascular tissues. Later observed in lateral root primordia, root tips, SAMs and young leaves.</text>
</comment>
<comment type="PTM">
    <text evidence="1">Phosphorylated in a cell-cycle-dependent manner (from the S phase until mitosis). In response to DNA damage, recruited to DNA-repair nuclear foci, as a hypophosphorylated form (By similarity).</text>
</comment>
<comment type="disruption phenotype">
    <text evidence="3 4 5">Affected cell division in meristems but normal final cell sizes. Earlier flowering and smaller plant size. Enhanced sensitivity to methyl methanesulfonate (MMS), a genotoxic agent that damages DNA bases. Enhanced expression of some transposons. When associated with ROS1 disruption, restored silencing of some genes associated with increased histone H3 acetylation and histone H3 'Lys-4' methylation (H3K4me2), but decreased histone H3 'Lys-9' methylation (H3K9me2) in their promoter.</text>
</comment>
<comment type="similarity">
    <text evidence="7">Belongs to the replication factor A protein 2 family.</text>
</comment>
<keyword id="KW-0227">DNA damage</keyword>
<keyword id="KW-0233">DNA recombination</keyword>
<keyword id="KW-0234">DNA repair</keyword>
<keyword id="KW-0235">DNA replication</keyword>
<keyword id="KW-0238">DNA-binding</keyword>
<keyword id="KW-0539">Nucleus</keyword>
<keyword id="KW-0597">Phosphoprotein</keyword>
<keyword id="KW-1185">Reference proteome</keyword>
<name>RFA2A_ARATH</name>
<feature type="chain" id="PRO_0000419968" description="Replication protein A 32 kDa subunit A">
    <location>
        <begin position="1"/>
        <end position="279"/>
    </location>
</feature>
<feature type="DNA-binding region" description="OB">
    <location>
        <begin position="73"/>
        <end position="148"/>
    </location>
</feature>
<feature type="region of interest" description="Disordered" evidence="2">
    <location>
        <begin position="1"/>
        <end position="33"/>
    </location>
</feature>
<feature type="compositionally biased region" description="Low complexity" evidence="2">
    <location>
        <begin position="19"/>
        <end position="32"/>
    </location>
</feature>
<accession>Q9ZQ19</accession>